<proteinExistence type="inferred from homology"/>
<sequence>MSENMEELWSKTLEELKQQLSKPSFETWFQSTEPVEMSSTDLYISVPNEFTKDWLNSRYKNSIENSLKKISGKQLKIKFLLPGEKIKMEEQNNENEEKPESTSKKSSQGSEHTTWLNPKYTFDTFVIGNANRFAHAASLAVAEAPAKAYNPLFIYGGVGLGKTHLMHAIGHYVLSHQPNYRVVYISSEKFTNEFINAIRDNKTVNFRNKYRNVDILLVDDIQFLAGKEQTQEEFFHTFNTLHENDKQIIISSDRPPKEIPTLEDRLRSRFEWGLITDIQAPDLETRIAILRKKAYLEKLDIPNDVIVYIANQIDTNIRELEGGLIRVIAYSSMANKKITKETAEEALKDILPNKQPKKMTVEHIQKTVAQYFGLKVDDLKAKKRTRSVAFPRQIAMYLARELTDSSLPKIGDEFGGRDHTTVMHAHDKIASDLKKESHLNETIDEIKNLLHGD</sequence>
<protein>
    <recommendedName>
        <fullName evidence="1">Chromosomal replication initiator protein DnaA</fullName>
    </recommendedName>
</protein>
<dbReference type="EMBL" id="CP001034">
    <property type="protein sequence ID" value="ACB83600.1"/>
    <property type="molecule type" value="Genomic_DNA"/>
</dbReference>
<dbReference type="RefSeq" id="WP_012446491.1">
    <property type="nucleotide sequence ID" value="NC_010718.1"/>
</dbReference>
<dbReference type="SMR" id="B2A2Y6"/>
<dbReference type="FunCoup" id="B2A2Y6">
    <property type="interactions" value="383"/>
</dbReference>
<dbReference type="STRING" id="457570.Nther_0001"/>
<dbReference type="KEGG" id="nth:Nther_0001"/>
<dbReference type="eggNOG" id="COG0593">
    <property type="taxonomic scope" value="Bacteria"/>
</dbReference>
<dbReference type="HOGENOM" id="CLU_026910_3_1_9"/>
<dbReference type="InParanoid" id="B2A2Y6"/>
<dbReference type="OrthoDB" id="9807019at2"/>
<dbReference type="Proteomes" id="UP000001683">
    <property type="component" value="Chromosome"/>
</dbReference>
<dbReference type="GO" id="GO:0005737">
    <property type="term" value="C:cytoplasm"/>
    <property type="evidence" value="ECO:0007669"/>
    <property type="project" value="UniProtKB-SubCell"/>
</dbReference>
<dbReference type="GO" id="GO:0005886">
    <property type="term" value="C:plasma membrane"/>
    <property type="evidence" value="ECO:0007669"/>
    <property type="project" value="TreeGrafter"/>
</dbReference>
<dbReference type="GO" id="GO:0005524">
    <property type="term" value="F:ATP binding"/>
    <property type="evidence" value="ECO:0007669"/>
    <property type="project" value="UniProtKB-UniRule"/>
</dbReference>
<dbReference type="GO" id="GO:0016887">
    <property type="term" value="F:ATP hydrolysis activity"/>
    <property type="evidence" value="ECO:0007669"/>
    <property type="project" value="InterPro"/>
</dbReference>
<dbReference type="GO" id="GO:0003688">
    <property type="term" value="F:DNA replication origin binding"/>
    <property type="evidence" value="ECO:0007669"/>
    <property type="project" value="UniProtKB-UniRule"/>
</dbReference>
<dbReference type="GO" id="GO:0008289">
    <property type="term" value="F:lipid binding"/>
    <property type="evidence" value="ECO:0007669"/>
    <property type="project" value="UniProtKB-KW"/>
</dbReference>
<dbReference type="GO" id="GO:0006270">
    <property type="term" value="P:DNA replication initiation"/>
    <property type="evidence" value="ECO:0007669"/>
    <property type="project" value="UniProtKB-UniRule"/>
</dbReference>
<dbReference type="GO" id="GO:0006275">
    <property type="term" value="P:regulation of DNA replication"/>
    <property type="evidence" value="ECO:0007669"/>
    <property type="project" value="UniProtKB-UniRule"/>
</dbReference>
<dbReference type="CDD" id="cd00009">
    <property type="entry name" value="AAA"/>
    <property type="match status" value="1"/>
</dbReference>
<dbReference type="CDD" id="cd06571">
    <property type="entry name" value="Bac_DnaA_C"/>
    <property type="match status" value="1"/>
</dbReference>
<dbReference type="FunFam" id="1.10.1750.10:FF:000003">
    <property type="entry name" value="Chromosomal replication initiator protein DnaA"/>
    <property type="match status" value="1"/>
</dbReference>
<dbReference type="FunFam" id="1.10.8.60:FF:000003">
    <property type="entry name" value="Chromosomal replication initiator protein DnaA"/>
    <property type="match status" value="1"/>
</dbReference>
<dbReference type="FunFam" id="3.40.50.300:FF:000150">
    <property type="entry name" value="Chromosomal replication initiator protein DnaA"/>
    <property type="match status" value="1"/>
</dbReference>
<dbReference type="Gene3D" id="1.10.1750.10">
    <property type="match status" value="1"/>
</dbReference>
<dbReference type="Gene3D" id="1.10.8.60">
    <property type="match status" value="1"/>
</dbReference>
<dbReference type="Gene3D" id="3.30.300.180">
    <property type="match status" value="1"/>
</dbReference>
<dbReference type="Gene3D" id="3.40.50.300">
    <property type="entry name" value="P-loop containing nucleotide triphosphate hydrolases"/>
    <property type="match status" value="1"/>
</dbReference>
<dbReference type="HAMAP" id="MF_00377">
    <property type="entry name" value="DnaA_bact"/>
    <property type="match status" value="1"/>
</dbReference>
<dbReference type="InterPro" id="IPR003593">
    <property type="entry name" value="AAA+_ATPase"/>
</dbReference>
<dbReference type="InterPro" id="IPR001957">
    <property type="entry name" value="Chromosome_initiator_DnaA"/>
</dbReference>
<dbReference type="InterPro" id="IPR020591">
    <property type="entry name" value="Chromosome_initiator_DnaA-like"/>
</dbReference>
<dbReference type="InterPro" id="IPR018312">
    <property type="entry name" value="Chromosome_initiator_DnaA_CS"/>
</dbReference>
<dbReference type="InterPro" id="IPR013159">
    <property type="entry name" value="DnaA_C"/>
</dbReference>
<dbReference type="InterPro" id="IPR013317">
    <property type="entry name" value="DnaA_dom"/>
</dbReference>
<dbReference type="InterPro" id="IPR024633">
    <property type="entry name" value="DnaA_N_dom"/>
</dbReference>
<dbReference type="InterPro" id="IPR038454">
    <property type="entry name" value="DnaA_N_sf"/>
</dbReference>
<dbReference type="InterPro" id="IPR027417">
    <property type="entry name" value="P-loop_NTPase"/>
</dbReference>
<dbReference type="InterPro" id="IPR010921">
    <property type="entry name" value="Trp_repressor/repl_initiator"/>
</dbReference>
<dbReference type="NCBIfam" id="TIGR00362">
    <property type="entry name" value="DnaA"/>
    <property type="match status" value="1"/>
</dbReference>
<dbReference type="NCBIfam" id="NF010686">
    <property type="entry name" value="PRK14086.1"/>
    <property type="match status" value="1"/>
</dbReference>
<dbReference type="PANTHER" id="PTHR30050">
    <property type="entry name" value="CHROMOSOMAL REPLICATION INITIATOR PROTEIN DNAA"/>
    <property type="match status" value="1"/>
</dbReference>
<dbReference type="PANTHER" id="PTHR30050:SF2">
    <property type="entry name" value="CHROMOSOMAL REPLICATION INITIATOR PROTEIN DNAA"/>
    <property type="match status" value="1"/>
</dbReference>
<dbReference type="Pfam" id="PF00308">
    <property type="entry name" value="Bac_DnaA"/>
    <property type="match status" value="1"/>
</dbReference>
<dbReference type="Pfam" id="PF08299">
    <property type="entry name" value="Bac_DnaA_C"/>
    <property type="match status" value="1"/>
</dbReference>
<dbReference type="Pfam" id="PF11638">
    <property type="entry name" value="DnaA_N"/>
    <property type="match status" value="1"/>
</dbReference>
<dbReference type="PRINTS" id="PR00051">
    <property type="entry name" value="DNAA"/>
</dbReference>
<dbReference type="SMART" id="SM00382">
    <property type="entry name" value="AAA"/>
    <property type="match status" value="1"/>
</dbReference>
<dbReference type="SMART" id="SM00760">
    <property type="entry name" value="Bac_DnaA_C"/>
    <property type="match status" value="1"/>
</dbReference>
<dbReference type="SUPFAM" id="SSF52540">
    <property type="entry name" value="P-loop containing nucleoside triphosphate hydrolases"/>
    <property type="match status" value="1"/>
</dbReference>
<dbReference type="SUPFAM" id="SSF48295">
    <property type="entry name" value="TrpR-like"/>
    <property type="match status" value="1"/>
</dbReference>
<dbReference type="PROSITE" id="PS01008">
    <property type="entry name" value="DNAA"/>
    <property type="match status" value="1"/>
</dbReference>
<name>DNAA_NATTJ</name>
<feature type="chain" id="PRO_1000121999" description="Chromosomal replication initiator protein DnaA">
    <location>
        <begin position="1"/>
        <end position="453"/>
    </location>
</feature>
<feature type="region of interest" description="Domain I, interacts with DnaA modulators" evidence="1">
    <location>
        <begin position="1"/>
        <end position="75"/>
    </location>
</feature>
<feature type="region of interest" description="Domain II" evidence="1">
    <location>
        <begin position="75"/>
        <end position="114"/>
    </location>
</feature>
<feature type="region of interest" description="Disordered" evidence="2">
    <location>
        <begin position="87"/>
        <end position="112"/>
    </location>
</feature>
<feature type="region of interest" description="Domain III, AAA+ region" evidence="1">
    <location>
        <begin position="115"/>
        <end position="331"/>
    </location>
</feature>
<feature type="region of interest" description="Domain IV, binds dsDNA" evidence="1">
    <location>
        <begin position="332"/>
        <end position="453"/>
    </location>
</feature>
<feature type="compositionally biased region" description="Basic and acidic residues" evidence="2">
    <location>
        <begin position="87"/>
        <end position="103"/>
    </location>
</feature>
<feature type="binding site" evidence="1">
    <location>
        <position position="159"/>
    </location>
    <ligand>
        <name>ATP</name>
        <dbReference type="ChEBI" id="CHEBI:30616"/>
    </ligand>
</feature>
<feature type="binding site" evidence="1">
    <location>
        <position position="161"/>
    </location>
    <ligand>
        <name>ATP</name>
        <dbReference type="ChEBI" id="CHEBI:30616"/>
    </ligand>
</feature>
<feature type="binding site" evidence="1">
    <location>
        <position position="162"/>
    </location>
    <ligand>
        <name>ATP</name>
        <dbReference type="ChEBI" id="CHEBI:30616"/>
    </ligand>
</feature>
<feature type="binding site" evidence="1">
    <location>
        <position position="163"/>
    </location>
    <ligand>
        <name>ATP</name>
        <dbReference type="ChEBI" id="CHEBI:30616"/>
    </ligand>
</feature>
<reference key="1">
    <citation type="submission" date="2008-04" db="EMBL/GenBank/DDBJ databases">
        <title>Complete sequence of chromosome of Natranaerobius thermophilus JW/NM-WN-LF.</title>
        <authorList>
            <consortium name="US DOE Joint Genome Institute"/>
            <person name="Copeland A."/>
            <person name="Lucas S."/>
            <person name="Lapidus A."/>
            <person name="Glavina del Rio T."/>
            <person name="Dalin E."/>
            <person name="Tice H."/>
            <person name="Bruce D."/>
            <person name="Goodwin L."/>
            <person name="Pitluck S."/>
            <person name="Chertkov O."/>
            <person name="Brettin T."/>
            <person name="Detter J.C."/>
            <person name="Han C."/>
            <person name="Kuske C.R."/>
            <person name="Schmutz J."/>
            <person name="Larimer F."/>
            <person name="Land M."/>
            <person name="Hauser L."/>
            <person name="Kyrpides N."/>
            <person name="Lykidis A."/>
            <person name="Mesbah N.M."/>
            <person name="Wiegel J."/>
        </authorList>
    </citation>
    <scope>NUCLEOTIDE SEQUENCE [LARGE SCALE GENOMIC DNA]</scope>
    <source>
        <strain>ATCC BAA-1301 / DSM 18059 / JW/NM-WN-LF</strain>
    </source>
</reference>
<gene>
    <name evidence="1" type="primary">dnaA</name>
    <name type="ordered locus">Nther_0001</name>
</gene>
<evidence type="ECO:0000255" key="1">
    <source>
        <dbReference type="HAMAP-Rule" id="MF_00377"/>
    </source>
</evidence>
<evidence type="ECO:0000256" key="2">
    <source>
        <dbReference type="SAM" id="MobiDB-lite"/>
    </source>
</evidence>
<accession>B2A2Y6</accession>
<organism>
    <name type="scientific">Natranaerobius thermophilus (strain ATCC BAA-1301 / DSM 18059 / JW/NM-WN-LF)</name>
    <dbReference type="NCBI Taxonomy" id="457570"/>
    <lineage>
        <taxon>Bacteria</taxon>
        <taxon>Bacillati</taxon>
        <taxon>Bacillota</taxon>
        <taxon>Clostridia</taxon>
        <taxon>Natranaerobiales</taxon>
        <taxon>Natranaerobiaceae</taxon>
        <taxon>Natranaerobius</taxon>
    </lineage>
</organism>
<keyword id="KW-0067">ATP-binding</keyword>
<keyword id="KW-0963">Cytoplasm</keyword>
<keyword id="KW-0235">DNA replication</keyword>
<keyword id="KW-0238">DNA-binding</keyword>
<keyword id="KW-0446">Lipid-binding</keyword>
<keyword id="KW-0547">Nucleotide-binding</keyword>
<keyword id="KW-1185">Reference proteome</keyword>
<comment type="function">
    <text evidence="1">Plays an essential role in the initiation and regulation of chromosomal replication. ATP-DnaA binds to the origin of replication (oriC) to initiate formation of the DNA replication initiation complex once per cell cycle. Binds the DnaA box (a 9 base pair repeat at the origin) and separates the double-stranded (ds)DNA. Forms a right-handed helical filament on oriC DNA; dsDNA binds to the exterior of the filament while single-stranded (ss)DNA is stabiized in the filament's interior. The ATP-DnaA-oriC complex binds and stabilizes one strand of the AT-rich DNA unwinding element (DUE), permitting loading of DNA polymerase. After initiation quickly degrades to an ADP-DnaA complex that is not apt for DNA replication. Binds acidic phospholipids.</text>
</comment>
<comment type="subunit">
    <text evidence="1">Oligomerizes as a right-handed, spiral filament on DNA at oriC.</text>
</comment>
<comment type="subcellular location">
    <subcellularLocation>
        <location evidence="1">Cytoplasm</location>
    </subcellularLocation>
</comment>
<comment type="domain">
    <text evidence="1">Domain I is involved in oligomerization and binding regulators, domain II is flexibile and of varying length in different bacteria, domain III forms the AAA+ region, while domain IV binds dsDNA.</text>
</comment>
<comment type="similarity">
    <text evidence="1">Belongs to the DnaA family.</text>
</comment>